<proteinExistence type="inferred from homology"/>
<gene>
    <name evidence="1" type="primary">rnpA</name>
    <name type="ordered locus">SSPA3439</name>
</gene>
<evidence type="ECO:0000255" key="1">
    <source>
        <dbReference type="HAMAP-Rule" id="MF_00227"/>
    </source>
</evidence>
<name>RNPA_SALPK</name>
<reference key="1">
    <citation type="journal article" date="2009" name="BMC Genomics">
        <title>Pseudogene accumulation in the evolutionary histories of Salmonella enterica serovars Paratyphi A and Typhi.</title>
        <authorList>
            <person name="Holt K.E."/>
            <person name="Thomson N.R."/>
            <person name="Wain J."/>
            <person name="Langridge G.C."/>
            <person name="Hasan R."/>
            <person name="Bhutta Z.A."/>
            <person name="Quail M.A."/>
            <person name="Norbertczak H."/>
            <person name="Walker D."/>
            <person name="Simmonds M."/>
            <person name="White B."/>
            <person name="Bason N."/>
            <person name="Mungall K."/>
            <person name="Dougan G."/>
            <person name="Parkhill J."/>
        </authorList>
    </citation>
    <scope>NUCLEOTIDE SEQUENCE [LARGE SCALE GENOMIC DNA]</scope>
    <source>
        <strain>AKU_12601</strain>
    </source>
</reference>
<feature type="chain" id="PRO_1000100391" description="Ribonuclease P protein component">
    <location>
        <begin position="1"/>
        <end position="119"/>
    </location>
</feature>
<accession>B5BIL6</accession>
<keyword id="KW-0255">Endonuclease</keyword>
<keyword id="KW-0378">Hydrolase</keyword>
<keyword id="KW-0540">Nuclease</keyword>
<keyword id="KW-0694">RNA-binding</keyword>
<keyword id="KW-0819">tRNA processing</keyword>
<comment type="function">
    <text evidence="1">RNaseP catalyzes the removal of the 5'-leader sequence from pre-tRNA to produce the mature 5'-terminus. It can also cleave other RNA substrates such as 4.5S RNA. The protein component plays an auxiliary but essential role in vivo by binding to the 5'-leader sequence and broadening the substrate specificity of the ribozyme.</text>
</comment>
<comment type="catalytic activity">
    <reaction evidence="1">
        <text>Endonucleolytic cleavage of RNA, removing 5'-extranucleotides from tRNA precursor.</text>
        <dbReference type="EC" id="3.1.26.5"/>
    </reaction>
</comment>
<comment type="subunit">
    <text evidence="1">Consists of a catalytic RNA component (M1 or rnpB) and a protein subunit.</text>
</comment>
<comment type="similarity">
    <text evidence="1">Belongs to the RnpA family.</text>
</comment>
<sequence length="119" mass="13772">MVKLAFSRELRLLTPAHFTFVFQQPQRAGTPQITILGRLNSLGHPRIGLTVAKKNVRRAHERNRIKRLTRESFRLRQHELPAMDFVVVAKKGVADLDNRALSEALEKLWRRHCRLARGS</sequence>
<organism>
    <name type="scientific">Salmonella paratyphi A (strain AKU_12601)</name>
    <dbReference type="NCBI Taxonomy" id="554290"/>
    <lineage>
        <taxon>Bacteria</taxon>
        <taxon>Pseudomonadati</taxon>
        <taxon>Pseudomonadota</taxon>
        <taxon>Gammaproteobacteria</taxon>
        <taxon>Enterobacterales</taxon>
        <taxon>Enterobacteriaceae</taxon>
        <taxon>Salmonella</taxon>
    </lineage>
</organism>
<dbReference type="EC" id="3.1.26.5" evidence="1"/>
<dbReference type="EMBL" id="FM200053">
    <property type="protein sequence ID" value="CAR61714.1"/>
    <property type="molecule type" value="Genomic_DNA"/>
</dbReference>
<dbReference type="RefSeq" id="WP_000239736.1">
    <property type="nucleotide sequence ID" value="NC_011147.1"/>
</dbReference>
<dbReference type="SMR" id="B5BIL6"/>
<dbReference type="KEGG" id="sek:SSPA3439"/>
<dbReference type="HOGENOM" id="CLU_117179_11_0_6"/>
<dbReference type="Proteomes" id="UP000001869">
    <property type="component" value="Chromosome"/>
</dbReference>
<dbReference type="GO" id="GO:0030677">
    <property type="term" value="C:ribonuclease P complex"/>
    <property type="evidence" value="ECO:0007669"/>
    <property type="project" value="TreeGrafter"/>
</dbReference>
<dbReference type="GO" id="GO:0042781">
    <property type="term" value="F:3'-tRNA processing endoribonuclease activity"/>
    <property type="evidence" value="ECO:0007669"/>
    <property type="project" value="TreeGrafter"/>
</dbReference>
<dbReference type="GO" id="GO:0004526">
    <property type="term" value="F:ribonuclease P activity"/>
    <property type="evidence" value="ECO:0007669"/>
    <property type="project" value="UniProtKB-UniRule"/>
</dbReference>
<dbReference type="GO" id="GO:0000049">
    <property type="term" value="F:tRNA binding"/>
    <property type="evidence" value="ECO:0007669"/>
    <property type="project" value="UniProtKB-UniRule"/>
</dbReference>
<dbReference type="GO" id="GO:0001682">
    <property type="term" value="P:tRNA 5'-leader removal"/>
    <property type="evidence" value="ECO:0007669"/>
    <property type="project" value="UniProtKB-UniRule"/>
</dbReference>
<dbReference type="FunFam" id="3.30.230.10:FF:000016">
    <property type="entry name" value="Ribonuclease P protein component"/>
    <property type="match status" value="1"/>
</dbReference>
<dbReference type="Gene3D" id="3.30.230.10">
    <property type="match status" value="1"/>
</dbReference>
<dbReference type="HAMAP" id="MF_00227">
    <property type="entry name" value="RNase_P"/>
    <property type="match status" value="1"/>
</dbReference>
<dbReference type="InterPro" id="IPR020568">
    <property type="entry name" value="Ribosomal_Su5_D2-typ_SF"/>
</dbReference>
<dbReference type="InterPro" id="IPR014721">
    <property type="entry name" value="Ribsml_uS5_D2-typ_fold_subgr"/>
</dbReference>
<dbReference type="InterPro" id="IPR000100">
    <property type="entry name" value="RNase_P"/>
</dbReference>
<dbReference type="InterPro" id="IPR020539">
    <property type="entry name" value="RNase_P_CS"/>
</dbReference>
<dbReference type="NCBIfam" id="TIGR00188">
    <property type="entry name" value="rnpA"/>
    <property type="match status" value="1"/>
</dbReference>
<dbReference type="PANTHER" id="PTHR33992">
    <property type="entry name" value="RIBONUCLEASE P PROTEIN COMPONENT"/>
    <property type="match status" value="1"/>
</dbReference>
<dbReference type="PANTHER" id="PTHR33992:SF1">
    <property type="entry name" value="RIBONUCLEASE P PROTEIN COMPONENT"/>
    <property type="match status" value="1"/>
</dbReference>
<dbReference type="Pfam" id="PF00825">
    <property type="entry name" value="Ribonuclease_P"/>
    <property type="match status" value="1"/>
</dbReference>
<dbReference type="SUPFAM" id="SSF54211">
    <property type="entry name" value="Ribosomal protein S5 domain 2-like"/>
    <property type="match status" value="1"/>
</dbReference>
<dbReference type="PROSITE" id="PS00648">
    <property type="entry name" value="RIBONUCLEASE_P"/>
    <property type="match status" value="1"/>
</dbReference>
<protein>
    <recommendedName>
        <fullName evidence="1">Ribonuclease P protein component</fullName>
        <shortName evidence="1">RNase P protein</shortName>
        <shortName evidence="1">RNaseP protein</shortName>
        <ecNumber evidence="1">3.1.26.5</ecNumber>
    </recommendedName>
    <alternativeName>
        <fullName evidence="1">Protein C5</fullName>
    </alternativeName>
</protein>